<sequence>MPATSMHQEDKQSANGLNLSPLERIKIEKHYGGGATLAFISNQHDELAQVLSRADILKIASYDCAAQALQAVLDCGPMLGKRGFSRADIVRIAGNGGGAQALYSVLDVEPTLGKRGFSQVDVVKIAGGGAQALHTVLEIGPTLGERGFSRGDIVTIAGNNGGAQALQAVLELEPTLRERGFNQADIVKIAGNGGGAQALQAVLDVEPALGKRGFSRVDIAKIAGGGAQALQAVLGLEPTLRKRGFHPTDIIKIAGNNGGAQALQAVLDLELMLRERGFSQADIVKMASNIGGAQALQAVLNLEPALCERGFSQPDIVKMAGNSGGAQALQAVLDLELAFRERGFSQADIVKMASNIGGAQALQAVLELEPALHERGFSQANIVKMAGNSGGAQALQAVLDLELVFRERGFSQPEIVEMAGNIGGAQALHTVLDLELAFRERGVRQADIVKIVGNNGGAQALQAVFELEPTLRERGFNQATIVKIAANGGGAQALYSVLDVEPTLDKRGFSRVDIVKIAGGGAQALHTAFELEPTLRKRGFNPTDIVKIAGNKGGAQALQAVLELEPALRERGFNQATIVKMAGNAGGAQALYSVLDVEPALRERGFSQPEIVKIAGNIGGAQALHTVLELEPTLHKRGFNPTDIVKIAGNSGGAQALQAVLELEPAFRERGFGQPDIVKMASNIGGAQALQAVLELEPALRERGFSQPDIVEMAGNIGGAQALQAVLELEPAFRERGFSQSDIVKIAGNIGGAQALQAVLELEPTLRESDFRQADIVNIAGNDGSTQALKAVIEHGPRLRQRGFNRASIVKIAGNSGGAQALQAVLKHGPTLDERGFNLTNIVKIAGNGGGAQALKAVIEHGPTLQQRGFNLTDIVEMAGKGGGAQALKAVLEHGPTLRQRGFNLIDIVEMASNTGGAQALKTVLEHGPTLRQRDLSLIDIVEIASNGGAQALKAVLKYGPVLMQAGRSNEEIVHVAARRGGAGRIRKMVALLLERQ</sequence>
<name>BAT2_MYCRK</name>
<comment type="function">
    <text evidence="3">Binds to DNA in a sequence-specific manner.</text>
</comment>
<comment type="domain">
    <text evidence="1">The protein is composed of 27 tandem core repeats (the BuD domain) with 1 base-specifying residue (BSR, residue 13), which recognizes 1 base pair in the target DNA.</text>
</comment>
<comment type="biotechnology">
    <text evidence="4 5 6">By combining the DNA-binding domain with the catalytic domain of the restriction endonuclease FokI, TALE-nuclease (TALEN, or BuDN) enzymes able to target specific dsDNA sequences can be created that enable eukaryotic genome modification. Other potential uses as transcriptional repressors, for transposon targeting, DNA methylation or histone tail modifictions are also possible.</text>
</comment>
<comment type="miscellaneous">
    <text evidence="7">DNA binding experiments were performed with a construct missing repeat 11.</text>
</comment>
<comment type="similarity">
    <text evidence="6">Belongs to the transcription activator-like effector (TALE) family. Bat subfamily.</text>
</comment>
<proteinExistence type="evidence at protein level"/>
<geneLocation type="plasmid">
    <name>pBRH02</name>
</geneLocation>
<evidence type="ECO:0000250" key="1">
    <source>
        <dbReference type="UniProtKB" id="E5AV36"/>
    </source>
</evidence>
<evidence type="ECO:0000255" key="2"/>
<evidence type="ECO:0000269" key="3">
    <source>
    </source>
</evidence>
<evidence type="ECO:0000303" key="4">
    <source>
    </source>
</evidence>
<evidence type="ECO:0000303" key="5">
    <source>
    </source>
</evidence>
<evidence type="ECO:0000303" key="6">
    <source>
    </source>
</evidence>
<evidence type="ECO:0000305" key="7"/>
<keyword id="KW-0040">ANK repeat</keyword>
<keyword id="KW-0238">DNA-binding</keyword>
<keyword id="KW-0614">Plasmid</keyword>
<keyword id="KW-0677">Repeat</keyword>
<protein>
    <recommendedName>
        <fullName evidence="6">Burkholderia TALE-like protein 2</fullName>
    </recommendedName>
    <alternativeName>
        <fullName evidence="4">Modular DNA-binding domain protein BurrH2</fullName>
    </alternativeName>
</protein>
<accession>E5AW45</accession>
<feature type="chain" id="PRO_0000430624" description="Burkholderia TALE-like protein 2">
    <location>
        <begin position="1"/>
        <end position="997"/>
    </location>
</feature>
<feature type="repeat" description="Cryptic repeat -1" evidence="4 6">
    <location>
        <begin position="19"/>
        <end position="50"/>
    </location>
</feature>
<feature type="repeat" description="Cryptic repeat 0" evidence="4 6">
    <location>
        <begin position="51"/>
        <end position="83"/>
    </location>
</feature>
<feature type="repeat" description="Core repeat 1" evidence="4 6">
    <location>
        <begin position="84"/>
        <end position="116"/>
    </location>
</feature>
<feature type="repeat" description="Core repeat 2" evidence="4 6">
    <location>
        <begin position="117"/>
        <end position="147"/>
    </location>
</feature>
<feature type="repeat" description="Core repeat 3" evidence="4 6">
    <location>
        <begin position="148"/>
        <end position="180"/>
    </location>
</feature>
<feature type="repeat" description="Core repeat 4" evidence="4 6">
    <location>
        <begin position="181"/>
        <end position="213"/>
    </location>
</feature>
<feature type="repeat" description="Core repeat 5" evidence="4 6">
    <location>
        <begin position="214"/>
        <end position="244"/>
    </location>
</feature>
<feature type="repeat" description="Core repeat 6" evidence="4 6">
    <location>
        <begin position="245"/>
        <end position="277"/>
    </location>
</feature>
<feature type="repeat" description="Core repeat 7" evidence="4 6">
    <location>
        <begin position="278"/>
        <end position="310"/>
    </location>
</feature>
<feature type="repeat" description="Core repeat 8" evidence="4 6">
    <location>
        <begin position="311"/>
        <end position="343"/>
    </location>
</feature>
<feature type="repeat" description="Core repeat 9" evidence="4 6">
    <location>
        <begin position="344"/>
        <end position="376"/>
    </location>
</feature>
<feature type="repeat" description="Core repeat 10" evidence="4 6">
    <location>
        <begin position="377"/>
        <end position="409"/>
    </location>
</feature>
<feature type="repeat" description="Core repeat 11" evidence="4 7">
    <location>
        <begin position="410"/>
        <end position="442"/>
    </location>
</feature>
<feature type="repeat" description="Core repeat 12" evidence="4 6">
    <location>
        <begin position="443"/>
        <end position="475"/>
    </location>
</feature>
<feature type="repeat" description="Core repeat 13" evidence="4 6">
    <location>
        <begin position="476"/>
        <end position="508"/>
    </location>
</feature>
<feature type="repeat" description="Core repeat 14" evidence="4 6">
    <location>
        <begin position="509"/>
        <end position="539"/>
    </location>
</feature>
<feature type="repeat" description="Core repeat 15" evidence="4 6">
    <location>
        <begin position="540"/>
        <end position="572"/>
    </location>
</feature>
<feature type="repeat" description="Core repeat 16" evidence="4 6">
    <location>
        <begin position="573"/>
        <end position="605"/>
    </location>
</feature>
<feature type="repeat" description="Core repeat 17" evidence="4 6">
    <location>
        <begin position="606"/>
        <end position="638"/>
    </location>
</feature>
<feature type="repeat" description="Core repeat 18" evidence="4 6">
    <location>
        <begin position="639"/>
        <end position="671"/>
    </location>
</feature>
<feature type="repeat" description="Core repeat 19" evidence="4 6">
    <location>
        <begin position="672"/>
        <end position="704"/>
    </location>
</feature>
<feature type="repeat" description="Core repeat 20" evidence="4 6">
    <location>
        <begin position="705"/>
        <end position="737"/>
    </location>
</feature>
<feature type="repeat" description="Core repeat 21" evidence="4 6">
    <location>
        <begin position="738"/>
        <end position="770"/>
    </location>
</feature>
<feature type="repeat" description="Core repeat 22" evidence="4 6">
    <location>
        <begin position="771"/>
        <end position="803"/>
    </location>
</feature>
<feature type="repeat" description="ANK 1" evidence="2">
    <location>
        <begin position="772"/>
        <end position="801"/>
    </location>
</feature>
<feature type="repeat" description="Core repeat 23" evidence="4 6">
    <location>
        <begin position="804"/>
        <end position="836"/>
    </location>
</feature>
<feature type="repeat" description="ANK 2" evidence="2">
    <location>
        <begin position="805"/>
        <end position="834"/>
    </location>
</feature>
<feature type="repeat" description="Core repeat 24" evidence="4 6">
    <location>
        <begin position="837"/>
        <end position="869"/>
    </location>
</feature>
<feature type="repeat" description="ANK 3" evidence="2">
    <location>
        <begin position="838"/>
        <end position="867"/>
    </location>
</feature>
<feature type="repeat" description="Core repeat 25" evidence="4 6">
    <location>
        <begin position="870"/>
        <end position="902"/>
    </location>
</feature>
<feature type="repeat" description="ANK 4" evidence="2">
    <location>
        <begin position="871"/>
        <end position="900"/>
    </location>
</feature>
<feature type="repeat" description="Core repeat 26" evidence="4 6">
    <location>
        <begin position="903"/>
        <end position="935"/>
    </location>
</feature>
<feature type="repeat" description="Core repeat 27" evidence="4 6">
    <location>
        <begin position="936"/>
        <end position="967"/>
    </location>
</feature>
<feature type="repeat" description="Cryptic repeat +1" evidence="6">
    <location>
        <begin position="968"/>
        <end position="997"/>
    </location>
</feature>
<feature type="region of interest" description="BuD domain" evidence="1">
    <location>
        <begin position="84"/>
        <end position="967"/>
    </location>
</feature>
<reference key="1">
    <citation type="journal article" date="2011" name="J. Bacteriol.">
        <title>Complete genome sequence of Burkholderia rhizoxinica, an endosymbiont of Rhizopus microsporus.</title>
        <authorList>
            <person name="Lackner G."/>
            <person name="Moebius N."/>
            <person name="Partida-Martinez L."/>
            <person name="Hertweck C."/>
        </authorList>
    </citation>
    <scope>NUCLEOTIDE SEQUENCE [LARGE SCALE GENOMIC DNA]</scope>
    <source>
        <strain>DSM 19002 / CIP 109453 / HKI 454</strain>
        <plasmid>pBRH02</plasmid>
    </source>
</reference>
<reference key="2">
    <citation type="journal article" date="2014" name="Nucleic Acids Res.">
        <title>Programmable DNA-binding proteins from Burkholderia provide a fresh perspective on the TALE-like repeat domain.</title>
        <authorList>
            <person name="de Lange O."/>
            <person name="Wolf C."/>
            <person name="Dietze J."/>
            <person name="Elsaesser J."/>
            <person name="Morbitzer R."/>
            <person name="Lahaye T."/>
        </authorList>
    </citation>
    <scope>FUNCTION</scope>
    <scope>DOMAIN</scope>
    <scope>BIOTECHNOLOGY</scope>
    <scope>REPEAT</scope>
    <scope>DNA-BINDING</scope>
    <source>
        <strain>DSM 19002 / CIP 109453 / HKI 454</strain>
    </source>
</reference>
<reference key="3">
    <citation type="journal article" date="2014" name="Plant J.">
        <title>From dead leaf, to new life: TAL effectors as tools for synthetic biology.</title>
        <authorList>
            <person name="de Lange O."/>
            <person name="Binder A."/>
            <person name="Lahaye T."/>
        </authorList>
    </citation>
    <scope>BIOTECHNOLOGY USES REVIEW</scope>
</reference>
<reference key="4">
    <citation type="journal article" date="2014" name="Sci. Rep.">
        <title>BurrH: a new modular DNA binding protein for genome engineering.</title>
        <authorList>
            <person name="Juillerat A."/>
            <person name="Bertonati C."/>
            <person name="Dubois G."/>
            <person name="Guyot V."/>
            <person name="Thomas S."/>
            <person name="Valton J."/>
            <person name="Beurdeley M."/>
            <person name="Silva G.H."/>
            <person name="Daboussi F."/>
            <person name="Duchateau P."/>
        </authorList>
    </citation>
    <scope>BIOTECHNOLOGY</scope>
    <scope>DOMAIN</scope>
    <scope>REPEAT</scope>
</reference>
<gene>
    <name evidence="6" type="primary">bat2</name>
    <name type="ordered locus">RBRH_01776</name>
</gene>
<organism>
    <name type="scientific">Mycetohabitans rhizoxinica (strain DSM 19002 / CIP 109453 / HKI 454)</name>
    <name type="common">Paraburkholderia rhizoxinica</name>
    <dbReference type="NCBI Taxonomy" id="882378"/>
    <lineage>
        <taxon>Bacteria</taxon>
        <taxon>Pseudomonadati</taxon>
        <taxon>Pseudomonadota</taxon>
        <taxon>Betaproteobacteria</taxon>
        <taxon>Burkholderiales</taxon>
        <taxon>Burkholderiaceae</taxon>
        <taxon>Mycetohabitans</taxon>
    </lineage>
</organism>
<dbReference type="EMBL" id="FR687361">
    <property type="protein sequence ID" value="CBW77347.1"/>
    <property type="molecule type" value="Genomic_DNA"/>
</dbReference>
<dbReference type="SMR" id="E5AW45"/>
<dbReference type="KEGG" id="brh:RBRH_01776"/>
<dbReference type="HOGENOM" id="CLU_300299_0_0_4"/>
<dbReference type="OrthoDB" id="6008802at2"/>
<dbReference type="Proteomes" id="UP000007437">
    <property type="component" value="Plasmid pBRH02"/>
</dbReference>
<dbReference type="GO" id="GO:0003690">
    <property type="term" value="F:double-stranded DNA binding"/>
    <property type="evidence" value="ECO:0000314"/>
    <property type="project" value="UniProtKB"/>
</dbReference>
<dbReference type="Gene3D" id="6.10.140.500">
    <property type="match status" value="15"/>
</dbReference>
<dbReference type="InterPro" id="IPR036770">
    <property type="entry name" value="Ankyrin_rpt-contain_sf"/>
</dbReference>
<dbReference type="SUPFAM" id="SSF48403">
    <property type="entry name" value="Ankyrin repeat"/>
    <property type="match status" value="1"/>
</dbReference>
<dbReference type="PROSITE" id="PS50297">
    <property type="entry name" value="ANK_REP_REGION"/>
    <property type="match status" value="1"/>
</dbReference>